<feature type="chain" id="PRO_0000116535" description="Uncharacterized protein C962.01">
    <location>
        <begin position="1"/>
        <end position="1429"/>
    </location>
</feature>
<feature type="transmembrane region" description="Helical" evidence="1">
    <location>
        <begin position="197"/>
        <end position="217"/>
    </location>
</feature>
<feature type="transmembrane region" description="Helical" evidence="1">
    <location>
        <begin position="225"/>
        <end position="245"/>
    </location>
</feature>
<feature type="domain" description="SMP-LTD" evidence="3">
    <location>
        <begin position="266"/>
        <end position="471"/>
    </location>
</feature>
<feature type="domain" description="C2 1" evidence="2">
    <location>
        <begin position="462"/>
        <end position="584"/>
    </location>
</feature>
<feature type="domain" description="C2 2" evidence="2">
    <location>
        <begin position="738"/>
        <end position="858"/>
    </location>
</feature>
<feature type="domain" description="C2 3" evidence="2">
    <location>
        <begin position="1060"/>
        <end position="1177"/>
    </location>
</feature>
<feature type="region of interest" description="Disordered" evidence="4">
    <location>
        <begin position="1"/>
        <end position="76"/>
    </location>
</feature>
<feature type="region of interest" description="Disordered" evidence="4">
    <location>
        <begin position="103"/>
        <end position="130"/>
    </location>
</feature>
<feature type="region of interest" description="Disordered" evidence="4">
    <location>
        <begin position="899"/>
        <end position="932"/>
    </location>
</feature>
<feature type="region of interest" description="Disordered" evidence="4">
    <location>
        <begin position="1280"/>
        <end position="1303"/>
    </location>
</feature>
<feature type="compositionally biased region" description="Low complexity" evidence="4">
    <location>
        <begin position="14"/>
        <end position="29"/>
    </location>
</feature>
<feature type="compositionally biased region" description="Polar residues" evidence="4">
    <location>
        <begin position="109"/>
        <end position="121"/>
    </location>
</feature>
<feature type="compositionally biased region" description="Low complexity" evidence="4">
    <location>
        <begin position="1294"/>
        <end position="1303"/>
    </location>
</feature>
<dbReference type="EMBL" id="CU329672">
    <property type="protein sequence ID" value="CAB58375.1"/>
    <property type="molecule type" value="Genomic_DNA"/>
</dbReference>
<dbReference type="EMBL" id="D89235">
    <property type="protein sequence ID" value="BAA13896.1"/>
    <property type="status" value="ALT_FRAME"/>
    <property type="molecule type" value="mRNA"/>
</dbReference>
<dbReference type="PIR" id="T41648">
    <property type="entry name" value="T41648"/>
</dbReference>
<dbReference type="PIR" id="T41699">
    <property type="entry name" value="T41699"/>
</dbReference>
<dbReference type="PIR" id="T43139">
    <property type="entry name" value="T43139"/>
</dbReference>
<dbReference type="RefSeq" id="NP_587865.1">
    <property type="nucleotide sequence ID" value="NM_001022858.2"/>
</dbReference>
<dbReference type="SMR" id="O14065"/>
<dbReference type="BioGRID" id="275856">
    <property type="interactions" value="1"/>
</dbReference>
<dbReference type="FunCoup" id="O14065">
    <property type="interactions" value="14"/>
</dbReference>
<dbReference type="STRING" id="284812.O14065"/>
<dbReference type="iPTMnet" id="O14065"/>
<dbReference type="SwissPalm" id="O14065"/>
<dbReference type="PaxDb" id="4896-SPCC962.01.1"/>
<dbReference type="EnsemblFungi" id="SPCC962.01.1">
    <property type="protein sequence ID" value="SPCC962.01.1:pep"/>
    <property type="gene ID" value="SPCC962.01"/>
</dbReference>
<dbReference type="GeneID" id="2539288"/>
<dbReference type="KEGG" id="spo:2539288"/>
<dbReference type="PomBase" id="SPCC962.01"/>
<dbReference type="VEuPathDB" id="FungiDB:SPCC962.01"/>
<dbReference type="eggNOG" id="KOG1012">
    <property type="taxonomic scope" value="Eukaryota"/>
</dbReference>
<dbReference type="HOGENOM" id="CLU_253068_0_0_1"/>
<dbReference type="InParanoid" id="O14065"/>
<dbReference type="OMA" id="EVMDHED"/>
<dbReference type="PhylomeDB" id="O14065"/>
<dbReference type="PRO" id="PR:O14065"/>
<dbReference type="Proteomes" id="UP000002485">
    <property type="component" value="Chromosome III"/>
</dbReference>
<dbReference type="GO" id="GO:0032541">
    <property type="term" value="C:cortical endoplasmic reticulum"/>
    <property type="evidence" value="ECO:0000314"/>
    <property type="project" value="PomBase"/>
</dbReference>
<dbReference type="GO" id="GO:0005783">
    <property type="term" value="C:endoplasmic reticulum"/>
    <property type="evidence" value="ECO:0000318"/>
    <property type="project" value="GO_Central"/>
</dbReference>
<dbReference type="GO" id="GO:0140268">
    <property type="term" value="C:endoplasmic reticulum-plasma membrane contact site"/>
    <property type="evidence" value="ECO:0000314"/>
    <property type="project" value="PomBase"/>
</dbReference>
<dbReference type="GO" id="GO:0016328">
    <property type="term" value="C:lateral plasma membrane"/>
    <property type="evidence" value="ECO:0000314"/>
    <property type="project" value="PomBase"/>
</dbReference>
<dbReference type="GO" id="GO:0005886">
    <property type="term" value="C:plasma membrane"/>
    <property type="evidence" value="ECO:0000318"/>
    <property type="project" value="GO_Central"/>
</dbReference>
<dbReference type="GO" id="GO:0008289">
    <property type="term" value="F:lipid binding"/>
    <property type="evidence" value="ECO:0000318"/>
    <property type="project" value="GO_Central"/>
</dbReference>
<dbReference type="GO" id="GO:0005543">
    <property type="term" value="F:phospholipid binding"/>
    <property type="evidence" value="ECO:0000255"/>
    <property type="project" value="PomBase"/>
</dbReference>
<dbReference type="GO" id="GO:0043495">
    <property type="term" value="F:protein-membrane adaptor activity"/>
    <property type="evidence" value="ECO:0000305"/>
    <property type="project" value="PomBase"/>
</dbReference>
<dbReference type="GO" id="GO:0090158">
    <property type="term" value="P:endoplasmic reticulum membrane organization"/>
    <property type="evidence" value="ECO:0000318"/>
    <property type="project" value="GO_Central"/>
</dbReference>
<dbReference type="GO" id="GO:0061817">
    <property type="term" value="P:endoplasmic reticulum-plasma membrane tethering"/>
    <property type="evidence" value="ECO:0000266"/>
    <property type="project" value="PomBase"/>
</dbReference>
<dbReference type="GO" id="GO:0035621">
    <property type="term" value="P:ER to Golgi ceramide transport"/>
    <property type="evidence" value="ECO:0000318"/>
    <property type="project" value="GO_Central"/>
</dbReference>
<dbReference type="CDD" id="cd04045">
    <property type="entry name" value="C2C_Tricalbin-like"/>
    <property type="match status" value="1"/>
</dbReference>
<dbReference type="CDD" id="cd21678">
    <property type="entry name" value="SMP_TCB"/>
    <property type="match status" value="1"/>
</dbReference>
<dbReference type="Gene3D" id="2.60.40.150">
    <property type="entry name" value="C2 domain"/>
    <property type="match status" value="3"/>
</dbReference>
<dbReference type="InterPro" id="IPR000008">
    <property type="entry name" value="C2_dom"/>
</dbReference>
<dbReference type="InterPro" id="IPR035892">
    <property type="entry name" value="C2_domain_sf"/>
</dbReference>
<dbReference type="InterPro" id="IPR037762">
    <property type="entry name" value="C2C_Tricalbin"/>
</dbReference>
<dbReference type="InterPro" id="IPR031468">
    <property type="entry name" value="SMP_LBD"/>
</dbReference>
<dbReference type="InterPro" id="IPR056910">
    <property type="entry name" value="TCB1-3_C2"/>
</dbReference>
<dbReference type="InterPro" id="IPR017147">
    <property type="entry name" value="Tricalbin"/>
</dbReference>
<dbReference type="InterPro" id="IPR052455">
    <property type="entry name" value="Tricalbin_domain"/>
</dbReference>
<dbReference type="PANTHER" id="PTHR46980:SF3">
    <property type="entry name" value="C2 DOMAIN-CONTAINING PROTEIN"/>
    <property type="match status" value="1"/>
</dbReference>
<dbReference type="PANTHER" id="PTHR46980">
    <property type="entry name" value="TRICALBIN-1-RELATED"/>
    <property type="match status" value="1"/>
</dbReference>
<dbReference type="Pfam" id="PF00168">
    <property type="entry name" value="C2"/>
    <property type="match status" value="4"/>
</dbReference>
<dbReference type="Pfam" id="PF24920">
    <property type="entry name" value="C2_TCB1"/>
    <property type="match status" value="1"/>
</dbReference>
<dbReference type="PIRSF" id="PIRSF037232">
    <property type="entry name" value="Tricalbin"/>
    <property type="match status" value="1"/>
</dbReference>
<dbReference type="SMART" id="SM00239">
    <property type="entry name" value="C2"/>
    <property type="match status" value="4"/>
</dbReference>
<dbReference type="SUPFAM" id="SSF49562">
    <property type="entry name" value="C2 domain (Calcium/lipid-binding domain, CaLB)"/>
    <property type="match status" value="3"/>
</dbReference>
<dbReference type="PROSITE" id="PS50004">
    <property type="entry name" value="C2"/>
    <property type="match status" value="3"/>
</dbReference>
<dbReference type="PROSITE" id="PS51847">
    <property type="entry name" value="SMP"/>
    <property type="match status" value="1"/>
</dbReference>
<proteinExistence type="evidence at transcript level"/>
<evidence type="ECO:0000255" key="1"/>
<evidence type="ECO:0000255" key="2">
    <source>
        <dbReference type="PROSITE-ProRule" id="PRU00041"/>
    </source>
</evidence>
<evidence type="ECO:0000255" key="3">
    <source>
        <dbReference type="PROSITE-ProRule" id="PRU01194"/>
    </source>
</evidence>
<evidence type="ECO:0000256" key="4">
    <source>
        <dbReference type="SAM" id="MobiDB-lite"/>
    </source>
</evidence>
<evidence type="ECO:0000305" key="5"/>
<keyword id="KW-0445">Lipid transport</keyword>
<keyword id="KW-0446">Lipid-binding</keyword>
<keyword id="KW-0472">Membrane</keyword>
<keyword id="KW-1185">Reference proteome</keyword>
<keyword id="KW-0677">Repeat</keyword>
<keyword id="KW-0812">Transmembrane</keyword>
<keyword id="KW-1133">Transmembrane helix</keyword>
<keyword id="KW-0813">Transport</keyword>
<organism>
    <name type="scientific">Schizosaccharomyces pombe (strain 972 / ATCC 24843)</name>
    <name type="common">Fission yeast</name>
    <dbReference type="NCBI Taxonomy" id="284812"/>
    <lineage>
        <taxon>Eukaryota</taxon>
        <taxon>Fungi</taxon>
        <taxon>Dikarya</taxon>
        <taxon>Ascomycota</taxon>
        <taxon>Taphrinomycotina</taxon>
        <taxon>Schizosaccharomycetes</taxon>
        <taxon>Schizosaccharomycetales</taxon>
        <taxon>Schizosaccharomycetaceae</taxon>
        <taxon>Schizosaccharomyces</taxon>
    </lineage>
</organism>
<name>YC31_SCHPO</name>
<protein>
    <recommendedName>
        <fullName>Uncharacterized protein C962.01</fullName>
    </recommendedName>
</protein>
<accession>O14065</accession>
<accession>P78884</accession>
<accession>Q9USG5</accession>
<reference key="1">
    <citation type="journal article" date="2002" name="Nature">
        <title>The genome sequence of Schizosaccharomyces pombe.</title>
        <authorList>
            <person name="Wood V."/>
            <person name="Gwilliam R."/>
            <person name="Rajandream M.A."/>
            <person name="Lyne M.H."/>
            <person name="Lyne R."/>
            <person name="Stewart A."/>
            <person name="Sgouros J.G."/>
            <person name="Peat N."/>
            <person name="Hayles J."/>
            <person name="Baker S.G."/>
            <person name="Basham D."/>
            <person name="Bowman S."/>
            <person name="Brooks K."/>
            <person name="Brown D."/>
            <person name="Brown S."/>
            <person name="Chillingworth T."/>
            <person name="Churcher C.M."/>
            <person name="Collins M."/>
            <person name="Connor R."/>
            <person name="Cronin A."/>
            <person name="Davis P."/>
            <person name="Feltwell T."/>
            <person name="Fraser A."/>
            <person name="Gentles S."/>
            <person name="Goble A."/>
            <person name="Hamlin N."/>
            <person name="Harris D.E."/>
            <person name="Hidalgo J."/>
            <person name="Hodgson G."/>
            <person name="Holroyd S."/>
            <person name="Hornsby T."/>
            <person name="Howarth S."/>
            <person name="Huckle E.J."/>
            <person name="Hunt S."/>
            <person name="Jagels K."/>
            <person name="James K.D."/>
            <person name="Jones L."/>
            <person name="Jones M."/>
            <person name="Leather S."/>
            <person name="McDonald S."/>
            <person name="McLean J."/>
            <person name="Mooney P."/>
            <person name="Moule S."/>
            <person name="Mungall K.L."/>
            <person name="Murphy L.D."/>
            <person name="Niblett D."/>
            <person name="Odell C."/>
            <person name="Oliver K."/>
            <person name="O'Neil S."/>
            <person name="Pearson D."/>
            <person name="Quail M.A."/>
            <person name="Rabbinowitsch E."/>
            <person name="Rutherford K.M."/>
            <person name="Rutter S."/>
            <person name="Saunders D."/>
            <person name="Seeger K."/>
            <person name="Sharp S."/>
            <person name="Skelton J."/>
            <person name="Simmonds M.N."/>
            <person name="Squares R."/>
            <person name="Squares S."/>
            <person name="Stevens K."/>
            <person name="Taylor K."/>
            <person name="Taylor R.G."/>
            <person name="Tivey A."/>
            <person name="Walsh S.V."/>
            <person name="Warren T."/>
            <person name="Whitehead S."/>
            <person name="Woodward J.R."/>
            <person name="Volckaert G."/>
            <person name="Aert R."/>
            <person name="Robben J."/>
            <person name="Grymonprez B."/>
            <person name="Weltjens I."/>
            <person name="Vanstreels E."/>
            <person name="Rieger M."/>
            <person name="Schaefer M."/>
            <person name="Mueller-Auer S."/>
            <person name="Gabel C."/>
            <person name="Fuchs M."/>
            <person name="Duesterhoeft A."/>
            <person name="Fritzc C."/>
            <person name="Holzer E."/>
            <person name="Moestl D."/>
            <person name="Hilbert H."/>
            <person name="Borzym K."/>
            <person name="Langer I."/>
            <person name="Beck A."/>
            <person name="Lehrach H."/>
            <person name="Reinhardt R."/>
            <person name="Pohl T.M."/>
            <person name="Eger P."/>
            <person name="Zimmermann W."/>
            <person name="Wedler H."/>
            <person name="Wambutt R."/>
            <person name="Purnelle B."/>
            <person name="Goffeau A."/>
            <person name="Cadieu E."/>
            <person name="Dreano S."/>
            <person name="Gloux S."/>
            <person name="Lelaure V."/>
            <person name="Mottier S."/>
            <person name="Galibert F."/>
            <person name="Aves S.J."/>
            <person name="Xiang Z."/>
            <person name="Hunt C."/>
            <person name="Moore K."/>
            <person name="Hurst S.M."/>
            <person name="Lucas M."/>
            <person name="Rochet M."/>
            <person name="Gaillardin C."/>
            <person name="Tallada V.A."/>
            <person name="Garzon A."/>
            <person name="Thode G."/>
            <person name="Daga R.R."/>
            <person name="Cruzado L."/>
            <person name="Jimenez J."/>
            <person name="Sanchez M."/>
            <person name="del Rey F."/>
            <person name="Benito J."/>
            <person name="Dominguez A."/>
            <person name="Revuelta J.L."/>
            <person name="Moreno S."/>
            <person name="Armstrong J."/>
            <person name="Forsburg S.L."/>
            <person name="Cerutti L."/>
            <person name="Lowe T."/>
            <person name="McCombie W.R."/>
            <person name="Paulsen I."/>
            <person name="Potashkin J."/>
            <person name="Shpakovski G.V."/>
            <person name="Ussery D."/>
            <person name="Barrell B.G."/>
            <person name="Nurse P."/>
        </authorList>
    </citation>
    <scope>NUCLEOTIDE SEQUENCE [LARGE SCALE GENOMIC DNA]</scope>
    <source>
        <strain>972 / ATCC 24843</strain>
    </source>
</reference>
<reference key="2">
    <citation type="journal article" date="1997" name="DNA Res.">
        <title>Identification of open reading frames in Schizosaccharomyces pombe cDNAs.</title>
        <authorList>
            <person name="Yoshioka S."/>
            <person name="Kato K."/>
            <person name="Nakai K."/>
            <person name="Okayama H."/>
            <person name="Nojima H."/>
        </authorList>
    </citation>
    <scope>NUCLEOTIDE SEQUENCE [LARGE SCALE MRNA] OF 1038-1429</scope>
    <source>
        <strain>PR745</strain>
    </source>
</reference>
<sequence length="1429" mass="156032">MEGENSKSVHPILSHSTSVVSERASSSGVNGTNGGMKQVSPVSTARTSIARRPPSTVGSQTGSLVNAPPKRSSGIERFDHVTGTAENRPQTPSTKASVANVKPAGAAESAQNANLISSKSENVPEPAGEKVSMPEKQDLQSALPSDAVSNAVIGWKSIYHASDVDVHDHFANVLSALQWDSHRVEPSILETYSSYKLTGQWWQSTSILLAVSILSWIASKLWFRFFILFFIIITGTIVYGSCMISVRRNIREEVVQELSKKNGDVDYETMSWFNTLLQRFWMLNEPEISKSVSTSVEQSIAEYLPSFIKEAAFSTFTLGSKAPRIDRVRTHPPVERDVVLMDVDFSLTPNDNYDVNDSSLKCRVNSLISLVIKFGFGKYMFSFPITIKDLRLSGKLRIRWGLSSDYPFIQTASFSFLETPIVYANIRPIDIPFLDADIFYIPGIGQFVSEQLGLLLNSMVLWPNMFDYDLSAMMAGIASGTAVGVVGLKIYSARRGEVSDSSIDRKPSSFITVTTSGREHGRTPIRSNTFSPTFDTTIYVVINSLNDPLKLSLYDNSGKSPILVGTTYIDPRSLYERGFIGDIYQFLYNAVNVGSVAFDATFFPSLLPKKTMDGSKIEPPESSKGILNVNLGCVNNLTELTELTKKSSLKYVLYVDSKEVASKTIKFVDRTPISLQTNAYIENNKKSSIKVAVFDVKSPEKAIATVSVPLPELLHEGYDTFHFVENPKATIDIESFWTPVDVVEEKSAKTYIDNLVGVMRLSVIKANDLVNVELPTRKSDPYARVIVGNSVVARTVYTPNNLNPIWNEILYVPIMADTKTIDLEAMDYEESGNDRSLGYASINVQKYIRNAKRLDRSALASTVFGTSEVNALTLTSRKGQSVRGTISVNCDYRPCLRLNTDNSSKQSSENVQSATDPTTPAKDNSTSNAETSSITSVISVNEALQYPSGFALISIVSADLQDVGVDLRVFTDNAAFPFITTPIAKTKTPRWSSFGISMVRELQFSETTFQLTDGAKKDPKVVCEHSVKTLDLVSEALGRPYSVEIPGSNGQLNHVRLSITYMPVPMTLNPMESYINSGSLHFMLQDGQNLPIGDIRSSDPFVVLKLNGESAFKSKVIKKNLNPVWNEEADIVVQNRVLDVLELVCYDWDMGEKPDVLGTSNIDLLSLEPNVESQQSIKLDSKTGTINASLRFVPGWHRRKAVLDVTLADNFLHAANKGAKLVVGGVGAAGGLALAGVTTIGSVGSKAVTGVADGVTGTGKHIISGAKGISKMGMFRRSLEKNPSRSDLTTTQEASSSASVPPAIAPESANAALTSTIDKTTGAPELAQKKYKVYVGQGKNMPHKTIKIIVTDNQDHSFKTKSRKGPSPSWNEEIPVKWSLGDELRISAVTSNLLGHTKLGEAVFQEDAIGTFRVVIGGSSSVEIKVEAE</sequence>
<gene>
    <name type="ORF">SPCC962.01</name>
    <name type="ORF">SPCP31B10.09</name>
</gene>
<comment type="subcellular location">
    <subcellularLocation>
        <location evidence="5">Membrane</location>
        <topology evidence="5">Multi-pass membrane protein</topology>
    </subcellularLocation>
</comment>
<comment type="sequence caution" evidence="5">
    <conflict type="frameshift">
        <sequence resource="EMBL-CDS" id="BAA13896"/>
    </conflict>
</comment>